<evidence type="ECO:0000250" key="1"/>
<evidence type="ECO:0000255" key="2"/>
<evidence type="ECO:0000305" key="3"/>
<protein>
    <recommendedName>
        <fullName>Multidrug resistance efflux pump SepA</fullName>
    </recommendedName>
    <alternativeName>
        <fullName>Antiseptic resistance protein SepA</fullName>
    </alternativeName>
    <alternativeName>
        <fullName>Staphylococcal efflux pump A</fullName>
    </alternativeName>
</protein>
<reference key="1">
    <citation type="journal article" date="2005" name="J. Bacteriol.">
        <title>Whole-genome sequencing of Staphylococcus haemolyticus uncovers the extreme plasticity of its genome and the evolution of human-colonizing staphylococcal species.</title>
        <authorList>
            <person name="Takeuchi F."/>
            <person name="Watanabe S."/>
            <person name="Baba T."/>
            <person name="Yuzawa H."/>
            <person name="Ito T."/>
            <person name="Morimoto Y."/>
            <person name="Kuroda M."/>
            <person name="Cui L."/>
            <person name="Takahashi M."/>
            <person name="Ankai A."/>
            <person name="Baba S."/>
            <person name="Fukui S."/>
            <person name="Lee J.C."/>
            <person name="Hiramatsu K."/>
        </authorList>
    </citation>
    <scope>NUCLEOTIDE SEQUENCE [LARGE SCALE GENOMIC DNA]</scope>
    <source>
        <strain>JCSC1435</strain>
    </source>
</reference>
<dbReference type="EMBL" id="AP006716">
    <property type="protein sequence ID" value="BAE04182.1"/>
    <property type="molecule type" value="Genomic_DNA"/>
</dbReference>
<dbReference type="RefSeq" id="WP_011275185.1">
    <property type="nucleotide sequence ID" value="NC_007168.1"/>
</dbReference>
<dbReference type="KEGG" id="sha:SH0873"/>
<dbReference type="eggNOG" id="ENOG5033YVE">
    <property type="taxonomic scope" value="Bacteria"/>
</dbReference>
<dbReference type="HOGENOM" id="CLU_151983_0_0_9"/>
<dbReference type="OrthoDB" id="2417783at2"/>
<dbReference type="Proteomes" id="UP000000543">
    <property type="component" value="Chromosome"/>
</dbReference>
<dbReference type="GO" id="GO:0005886">
    <property type="term" value="C:plasma membrane"/>
    <property type="evidence" value="ECO:0007669"/>
    <property type="project" value="UniProtKB-SubCell"/>
</dbReference>
<dbReference type="InterPro" id="IPR031396">
    <property type="entry name" value="SepA"/>
</dbReference>
<dbReference type="Pfam" id="PF17080">
    <property type="entry name" value="SepA"/>
    <property type="match status" value="1"/>
</dbReference>
<accession>Q4L843</accession>
<proteinExistence type="inferred from homology"/>
<comment type="function">
    <text evidence="1">Involved in multidrug efflux.</text>
</comment>
<comment type="subcellular location">
    <subcellularLocation>
        <location evidence="3">Cell membrane</location>
        <topology evidence="3">Multi-pass membrane protein</topology>
    </subcellularLocation>
</comment>
<comment type="similarity">
    <text evidence="3">Belongs to the multidrug resistance efflux pump SepA family.</text>
</comment>
<gene>
    <name type="primary">sepA</name>
    <name type="ordered locus">SH0873</name>
</gene>
<keyword id="KW-1003">Cell membrane</keyword>
<keyword id="KW-0472">Membrane</keyword>
<keyword id="KW-0812">Transmembrane</keyword>
<keyword id="KW-1133">Transmembrane helix</keyword>
<keyword id="KW-0813">Transport</keyword>
<name>MDEP_STAHJ</name>
<sequence>MKFFKNNYKNILSTLLVLTIFIISGAIFLMFLGFGLFGLSRILIFFKLGYFTYNKNLVDNLVYYGSYIVFGYFILFAIEHLMDYFRKQLPNNPYFNGSLYQLISYVVTTILFYFIIHIHYVYIEIDFWVISVIIGLLYIFKIIFYPDSENLNNKK</sequence>
<organism>
    <name type="scientific">Staphylococcus haemolyticus (strain JCSC1435)</name>
    <dbReference type="NCBI Taxonomy" id="279808"/>
    <lineage>
        <taxon>Bacteria</taxon>
        <taxon>Bacillati</taxon>
        <taxon>Bacillota</taxon>
        <taxon>Bacilli</taxon>
        <taxon>Bacillales</taxon>
        <taxon>Staphylococcaceae</taxon>
        <taxon>Staphylococcus</taxon>
    </lineage>
</organism>
<feature type="chain" id="PRO_0000351497" description="Multidrug resistance efflux pump SepA">
    <location>
        <begin position="1"/>
        <end position="155"/>
    </location>
</feature>
<feature type="transmembrane region" description="Helical" evidence="2">
    <location>
        <begin position="17"/>
        <end position="37"/>
    </location>
</feature>
<feature type="transmembrane region" description="Helical" evidence="2">
    <location>
        <begin position="61"/>
        <end position="81"/>
    </location>
</feature>
<feature type="transmembrane region" description="Helical" evidence="2">
    <location>
        <begin position="103"/>
        <end position="123"/>
    </location>
</feature>
<feature type="transmembrane region" description="Helical" evidence="2">
    <location>
        <begin position="125"/>
        <end position="145"/>
    </location>
</feature>